<keyword id="KW-0240">DNA-directed RNA polymerase</keyword>
<keyword id="KW-0548">Nucleotidyltransferase</keyword>
<keyword id="KW-1185">Reference proteome</keyword>
<keyword id="KW-0804">Transcription</keyword>
<keyword id="KW-0808">Transferase</keyword>
<protein>
    <recommendedName>
        <fullName evidence="1">DNA-directed RNA polymerase subunit alpha</fullName>
        <shortName evidence="1">RNAP subunit alpha</shortName>
        <ecNumber evidence="1">2.7.7.6</ecNumber>
    </recommendedName>
    <alternativeName>
        <fullName evidence="1">RNA polymerase subunit alpha</fullName>
    </alternativeName>
    <alternativeName>
        <fullName evidence="1">Transcriptase subunit alpha</fullName>
    </alternativeName>
</protein>
<evidence type="ECO:0000255" key="1">
    <source>
        <dbReference type="HAMAP-Rule" id="MF_00059"/>
    </source>
</evidence>
<proteinExistence type="inferred from homology"/>
<comment type="function">
    <text evidence="1">DNA-dependent RNA polymerase catalyzes the transcription of DNA into RNA using the four ribonucleoside triphosphates as substrates.</text>
</comment>
<comment type="catalytic activity">
    <reaction evidence="1">
        <text>RNA(n) + a ribonucleoside 5'-triphosphate = RNA(n+1) + diphosphate</text>
        <dbReference type="Rhea" id="RHEA:21248"/>
        <dbReference type="Rhea" id="RHEA-COMP:14527"/>
        <dbReference type="Rhea" id="RHEA-COMP:17342"/>
        <dbReference type="ChEBI" id="CHEBI:33019"/>
        <dbReference type="ChEBI" id="CHEBI:61557"/>
        <dbReference type="ChEBI" id="CHEBI:140395"/>
        <dbReference type="EC" id="2.7.7.6"/>
    </reaction>
</comment>
<comment type="subunit">
    <text evidence="1">Homodimer. The RNAP catalytic core consists of 2 alpha, 1 beta, 1 beta' and 1 omega subunit. When a sigma factor is associated with the core the holoenzyme is formed, which can initiate transcription.</text>
</comment>
<comment type="domain">
    <text evidence="1">The N-terminal domain is essential for RNAP assembly and basal transcription, whereas the C-terminal domain is involved in interaction with transcriptional regulators and with upstream promoter elements.</text>
</comment>
<comment type="similarity">
    <text evidence="1">Belongs to the RNA polymerase alpha chain family.</text>
</comment>
<dbReference type="EC" id="2.7.7.6" evidence="1"/>
<dbReference type="EMBL" id="AM406670">
    <property type="protein sequence ID" value="CAL96007.1"/>
    <property type="molecule type" value="Genomic_DNA"/>
</dbReference>
<dbReference type="SMR" id="A1KB01"/>
<dbReference type="STRING" id="62928.azo3391"/>
<dbReference type="KEGG" id="aoa:dqs_3530"/>
<dbReference type="KEGG" id="azo:azo3391"/>
<dbReference type="eggNOG" id="COG0202">
    <property type="taxonomic scope" value="Bacteria"/>
</dbReference>
<dbReference type="HOGENOM" id="CLU_053084_0_0_4"/>
<dbReference type="OrthoDB" id="9805706at2"/>
<dbReference type="Proteomes" id="UP000002588">
    <property type="component" value="Chromosome"/>
</dbReference>
<dbReference type="GO" id="GO:0005737">
    <property type="term" value="C:cytoplasm"/>
    <property type="evidence" value="ECO:0007669"/>
    <property type="project" value="UniProtKB-ARBA"/>
</dbReference>
<dbReference type="GO" id="GO:0000428">
    <property type="term" value="C:DNA-directed RNA polymerase complex"/>
    <property type="evidence" value="ECO:0007669"/>
    <property type="project" value="UniProtKB-KW"/>
</dbReference>
<dbReference type="GO" id="GO:0003677">
    <property type="term" value="F:DNA binding"/>
    <property type="evidence" value="ECO:0007669"/>
    <property type="project" value="UniProtKB-UniRule"/>
</dbReference>
<dbReference type="GO" id="GO:0003899">
    <property type="term" value="F:DNA-directed RNA polymerase activity"/>
    <property type="evidence" value="ECO:0007669"/>
    <property type="project" value="UniProtKB-UniRule"/>
</dbReference>
<dbReference type="GO" id="GO:0046983">
    <property type="term" value="F:protein dimerization activity"/>
    <property type="evidence" value="ECO:0007669"/>
    <property type="project" value="InterPro"/>
</dbReference>
<dbReference type="GO" id="GO:0006351">
    <property type="term" value="P:DNA-templated transcription"/>
    <property type="evidence" value="ECO:0007669"/>
    <property type="project" value="UniProtKB-UniRule"/>
</dbReference>
<dbReference type="CDD" id="cd06928">
    <property type="entry name" value="RNAP_alpha_NTD"/>
    <property type="match status" value="1"/>
</dbReference>
<dbReference type="FunFam" id="1.10.150.20:FF:000001">
    <property type="entry name" value="DNA-directed RNA polymerase subunit alpha"/>
    <property type="match status" value="1"/>
</dbReference>
<dbReference type="FunFam" id="2.170.120.12:FF:000001">
    <property type="entry name" value="DNA-directed RNA polymerase subunit alpha"/>
    <property type="match status" value="1"/>
</dbReference>
<dbReference type="Gene3D" id="1.10.150.20">
    <property type="entry name" value="5' to 3' exonuclease, C-terminal subdomain"/>
    <property type="match status" value="1"/>
</dbReference>
<dbReference type="Gene3D" id="2.170.120.12">
    <property type="entry name" value="DNA-directed RNA polymerase, insert domain"/>
    <property type="match status" value="1"/>
</dbReference>
<dbReference type="Gene3D" id="3.30.1360.10">
    <property type="entry name" value="RNA polymerase, RBP11-like subunit"/>
    <property type="match status" value="1"/>
</dbReference>
<dbReference type="HAMAP" id="MF_00059">
    <property type="entry name" value="RNApol_bact_RpoA"/>
    <property type="match status" value="1"/>
</dbReference>
<dbReference type="InterPro" id="IPR011262">
    <property type="entry name" value="DNA-dir_RNA_pol_insert"/>
</dbReference>
<dbReference type="InterPro" id="IPR011263">
    <property type="entry name" value="DNA-dir_RNA_pol_RpoA/D/Rpb3"/>
</dbReference>
<dbReference type="InterPro" id="IPR011773">
    <property type="entry name" value="DNA-dir_RpoA"/>
</dbReference>
<dbReference type="InterPro" id="IPR036603">
    <property type="entry name" value="RBP11-like"/>
</dbReference>
<dbReference type="InterPro" id="IPR011260">
    <property type="entry name" value="RNAP_asu_C"/>
</dbReference>
<dbReference type="InterPro" id="IPR036643">
    <property type="entry name" value="RNApol_insert_sf"/>
</dbReference>
<dbReference type="NCBIfam" id="NF003513">
    <property type="entry name" value="PRK05182.1-2"/>
    <property type="match status" value="1"/>
</dbReference>
<dbReference type="NCBIfam" id="NF003519">
    <property type="entry name" value="PRK05182.2-5"/>
    <property type="match status" value="1"/>
</dbReference>
<dbReference type="NCBIfam" id="TIGR02027">
    <property type="entry name" value="rpoA"/>
    <property type="match status" value="1"/>
</dbReference>
<dbReference type="Pfam" id="PF01000">
    <property type="entry name" value="RNA_pol_A_bac"/>
    <property type="match status" value="1"/>
</dbReference>
<dbReference type="Pfam" id="PF03118">
    <property type="entry name" value="RNA_pol_A_CTD"/>
    <property type="match status" value="1"/>
</dbReference>
<dbReference type="Pfam" id="PF01193">
    <property type="entry name" value="RNA_pol_L"/>
    <property type="match status" value="1"/>
</dbReference>
<dbReference type="SMART" id="SM00662">
    <property type="entry name" value="RPOLD"/>
    <property type="match status" value="1"/>
</dbReference>
<dbReference type="SUPFAM" id="SSF47789">
    <property type="entry name" value="C-terminal domain of RNA polymerase alpha subunit"/>
    <property type="match status" value="1"/>
</dbReference>
<dbReference type="SUPFAM" id="SSF56553">
    <property type="entry name" value="Insert subdomain of RNA polymerase alpha subunit"/>
    <property type="match status" value="1"/>
</dbReference>
<dbReference type="SUPFAM" id="SSF55257">
    <property type="entry name" value="RBP11-like subunits of RNA polymerase"/>
    <property type="match status" value="1"/>
</dbReference>
<gene>
    <name evidence="1" type="primary">rpoA</name>
    <name type="ordered locus">azo3391</name>
</gene>
<organism>
    <name type="scientific">Azoarcus sp. (strain BH72)</name>
    <dbReference type="NCBI Taxonomy" id="418699"/>
    <lineage>
        <taxon>Bacteria</taxon>
        <taxon>Pseudomonadati</taxon>
        <taxon>Pseudomonadota</taxon>
        <taxon>Betaproteobacteria</taxon>
        <taxon>Rhodocyclales</taxon>
        <taxon>Zoogloeaceae</taxon>
        <taxon>Azoarcus</taxon>
    </lineage>
</organism>
<feature type="chain" id="PRO_0000296781" description="DNA-directed RNA polymerase subunit alpha">
    <location>
        <begin position="1"/>
        <end position="326"/>
    </location>
</feature>
<feature type="region of interest" description="Alpha N-terminal domain (alpha-NTD)" evidence="1">
    <location>
        <begin position="1"/>
        <end position="231"/>
    </location>
</feature>
<feature type="region of interest" description="Alpha C-terminal domain (alpha-CTD)" evidence="1">
    <location>
        <begin position="245"/>
        <end position="326"/>
    </location>
</feature>
<sequence length="326" mass="35732">MQSNALLKPRIIDVQSISPVQARVTMEPFERGFGHTLGNALRRILLSSLPGHAPTEVSIEGVLHEYSTLDGMREDIVDLLLNLKGVVLKLHNRSEAMLTLSKSGEGVVTARDIEGGHDVEIINPDHVIAHLAPGGKLEMQIKVEQGRGYVPGNARPVSAENKTIGRIVLDASFSPVRRVSYLVESARVEQRTDLDRLVIDIETNGAVDPEEAIRYAARVLMDQLSVFADLEGTPVAVVPEKTPSIDPVLLRPVDDLELTVRSANCLKAENIYYIGDLIQRTETELLKTPNLGRKSLNEIKEVLASRGLTLGMKLENWPPAGLEKLG</sequence>
<reference key="1">
    <citation type="journal article" date="2006" name="Nat. Biotechnol.">
        <title>Complete genome of the mutualistic, N2-fixing grass endophyte Azoarcus sp. strain BH72.</title>
        <authorList>
            <person name="Krause A."/>
            <person name="Ramakumar A."/>
            <person name="Bartels D."/>
            <person name="Battistoni F."/>
            <person name="Bekel T."/>
            <person name="Boch J."/>
            <person name="Boehm M."/>
            <person name="Friedrich F."/>
            <person name="Hurek T."/>
            <person name="Krause L."/>
            <person name="Linke B."/>
            <person name="McHardy A.C."/>
            <person name="Sarkar A."/>
            <person name="Schneiker S."/>
            <person name="Syed A.A."/>
            <person name="Thauer R."/>
            <person name="Vorhoelter F.-J."/>
            <person name="Weidner S."/>
            <person name="Puehler A."/>
            <person name="Reinhold-Hurek B."/>
            <person name="Kaiser O."/>
            <person name="Goesmann A."/>
        </authorList>
    </citation>
    <scope>NUCLEOTIDE SEQUENCE [LARGE SCALE GENOMIC DNA]</scope>
    <source>
        <strain>BH72</strain>
    </source>
</reference>
<accession>A1KB01</accession>
<name>RPOA_AZOSB</name>